<organism>
    <name type="scientific">Ehrlichia canis (strain Jake)</name>
    <dbReference type="NCBI Taxonomy" id="269484"/>
    <lineage>
        <taxon>Bacteria</taxon>
        <taxon>Pseudomonadati</taxon>
        <taxon>Pseudomonadota</taxon>
        <taxon>Alphaproteobacteria</taxon>
        <taxon>Rickettsiales</taxon>
        <taxon>Anaplasmataceae</taxon>
        <taxon>Ehrlichia</taxon>
    </lineage>
</organism>
<accession>Q3YRS0</accession>
<sequence>MDHIDKKCSMNAIVGTTNAGKSTLINMLVGRKVAAVTPKVQTTRVRMHAVLNNENVQLIFIDTPGIFSPKTKLEKFIVKHAWMSLKGIENVILLLDVKNYLNKHIEKIISRIKQSNINAILVVNKIDMVSQALVDKAIEYMYSLHNFSKTFTISALHDIGLNRLINYLCEISPSGPWLYPEGQISDAPLKFFIAEITREKLFLSLHHELPYSLSVVTEALEEKVDGSLIVKQVIYVTKDNHKTIILGKKGEMIKKISIESRSELEKILDLKIHLFLFVKVRELWQDHLNECVGYVE</sequence>
<gene>
    <name evidence="1" type="primary">era</name>
    <name type="ordered locus">Ecaj_0550</name>
</gene>
<comment type="function">
    <text evidence="1">An essential GTPase that binds both GDP and GTP, with rapid nucleotide exchange. Plays a role in 16S rRNA processing and 30S ribosomal subunit biogenesis and possibly also in cell cycle regulation and energy metabolism.</text>
</comment>
<comment type="subunit">
    <text evidence="1">Monomer.</text>
</comment>
<comment type="subcellular location">
    <subcellularLocation>
        <location>Cytoplasm</location>
    </subcellularLocation>
    <subcellularLocation>
        <location evidence="1">Cell inner membrane</location>
        <topology evidence="1">Peripheral membrane protein</topology>
    </subcellularLocation>
</comment>
<comment type="similarity">
    <text evidence="1 2">Belongs to the TRAFAC class TrmE-Era-EngA-EngB-Septin-like GTPase superfamily. Era GTPase family.</text>
</comment>
<protein>
    <recommendedName>
        <fullName evidence="1">GTPase Era</fullName>
    </recommendedName>
</protein>
<evidence type="ECO:0000255" key="1">
    <source>
        <dbReference type="HAMAP-Rule" id="MF_00367"/>
    </source>
</evidence>
<evidence type="ECO:0000255" key="2">
    <source>
        <dbReference type="PROSITE-ProRule" id="PRU01050"/>
    </source>
</evidence>
<keyword id="KW-0997">Cell inner membrane</keyword>
<keyword id="KW-1003">Cell membrane</keyword>
<keyword id="KW-0963">Cytoplasm</keyword>
<keyword id="KW-0342">GTP-binding</keyword>
<keyword id="KW-0472">Membrane</keyword>
<keyword id="KW-0547">Nucleotide-binding</keyword>
<keyword id="KW-0690">Ribosome biogenesis</keyword>
<keyword id="KW-0694">RNA-binding</keyword>
<keyword id="KW-0699">rRNA-binding</keyword>
<feature type="chain" id="PRO_1000079692" description="GTPase Era">
    <location>
        <begin position="1"/>
        <end position="296"/>
    </location>
</feature>
<feature type="domain" description="Era-type G" evidence="2">
    <location>
        <begin position="7"/>
        <end position="174"/>
    </location>
</feature>
<feature type="domain" description="KH type-2" evidence="1">
    <location>
        <begin position="205"/>
        <end position="282"/>
    </location>
</feature>
<feature type="region of interest" description="G1" evidence="2">
    <location>
        <begin position="15"/>
        <end position="22"/>
    </location>
</feature>
<feature type="region of interest" description="G2" evidence="2">
    <location>
        <begin position="41"/>
        <end position="45"/>
    </location>
</feature>
<feature type="region of interest" description="G3" evidence="2">
    <location>
        <begin position="62"/>
        <end position="65"/>
    </location>
</feature>
<feature type="region of interest" description="G4" evidence="2">
    <location>
        <begin position="124"/>
        <end position="127"/>
    </location>
</feature>
<feature type="region of interest" description="G5" evidence="2">
    <location>
        <begin position="153"/>
        <end position="155"/>
    </location>
</feature>
<feature type="binding site" evidence="1">
    <location>
        <begin position="15"/>
        <end position="22"/>
    </location>
    <ligand>
        <name>GTP</name>
        <dbReference type="ChEBI" id="CHEBI:37565"/>
    </ligand>
</feature>
<feature type="binding site" evidence="1">
    <location>
        <begin position="62"/>
        <end position="66"/>
    </location>
    <ligand>
        <name>GTP</name>
        <dbReference type="ChEBI" id="CHEBI:37565"/>
    </ligand>
</feature>
<feature type="binding site" evidence="1">
    <location>
        <begin position="124"/>
        <end position="127"/>
    </location>
    <ligand>
        <name>GTP</name>
        <dbReference type="ChEBI" id="CHEBI:37565"/>
    </ligand>
</feature>
<name>ERA_EHRCJ</name>
<reference key="1">
    <citation type="journal article" date="2006" name="J. Bacteriol.">
        <title>The genome of the obligately intracellular bacterium Ehrlichia canis reveals themes of complex membrane structure and immune evasion strategies.</title>
        <authorList>
            <person name="Mavromatis K."/>
            <person name="Doyle C.K."/>
            <person name="Lykidis A."/>
            <person name="Ivanova N."/>
            <person name="Francino M.P."/>
            <person name="Chain P."/>
            <person name="Shin M."/>
            <person name="Malfatti S."/>
            <person name="Larimer F."/>
            <person name="Copeland A."/>
            <person name="Detter J.C."/>
            <person name="Land M."/>
            <person name="Richardson P.M."/>
            <person name="Yu X.J."/>
            <person name="Walker D.H."/>
            <person name="McBride J.W."/>
            <person name="Kyrpides N.C."/>
        </authorList>
    </citation>
    <scope>NUCLEOTIDE SEQUENCE [LARGE SCALE GENOMIC DNA]</scope>
    <source>
        <strain>Jake</strain>
    </source>
</reference>
<proteinExistence type="inferred from homology"/>
<dbReference type="EMBL" id="CP000107">
    <property type="protein sequence ID" value="AAZ68585.1"/>
    <property type="molecule type" value="Genomic_DNA"/>
</dbReference>
<dbReference type="RefSeq" id="WP_011304663.1">
    <property type="nucleotide sequence ID" value="NC_007354.1"/>
</dbReference>
<dbReference type="SMR" id="Q3YRS0"/>
<dbReference type="FunCoup" id="Q3YRS0">
    <property type="interactions" value="313"/>
</dbReference>
<dbReference type="STRING" id="269484.Ecaj_0550"/>
<dbReference type="KEGG" id="ecn:Ecaj_0550"/>
<dbReference type="eggNOG" id="COG1159">
    <property type="taxonomic scope" value="Bacteria"/>
</dbReference>
<dbReference type="HOGENOM" id="CLU_038009_1_1_5"/>
<dbReference type="InParanoid" id="Q3YRS0"/>
<dbReference type="Proteomes" id="UP000000435">
    <property type="component" value="Chromosome"/>
</dbReference>
<dbReference type="GO" id="GO:0005829">
    <property type="term" value="C:cytosol"/>
    <property type="evidence" value="ECO:0007669"/>
    <property type="project" value="TreeGrafter"/>
</dbReference>
<dbReference type="GO" id="GO:0005886">
    <property type="term" value="C:plasma membrane"/>
    <property type="evidence" value="ECO:0007669"/>
    <property type="project" value="UniProtKB-SubCell"/>
</dbReference>
<dbReference type="GO" id="GO:0005525">
    <property type="term" value="F:GTP binding"/>
    <property type="evidence" value="ECO:0007669"/>
    <property type="project" value="UniProtKB-UniRule"/>
</dbReference>
<dbReference type="GO" id="GO:0003924">
    <property type="term" value="F:GTPase activity"/>
    <property type="evidence" value="ECO:0007669"/>
    <property type="project" value="UniProtKB-UniRule"/>
</dbReference>
<dbReference type="GO" id="GO:0043024">
    <property type="term" value="F:ribosomal small subunit binding"/>
    <property type="evidence" value="ECO:0007669"/>
    <property type="project" value="TreeGrafter"/>
</dbReference>
<dbReference type="GO" id="GO:0070181">
    <property type="term" value="F:small ribosomal subunit rRNA binding"/>
    <property type="evidence" value="ECO:0007669"/>
    <property type="project" value="UniProtKB-UniRule"/>
</dbReference>
<dbReference type="GO" id="GO:0000028">
    <property type="term" value="P:ribosomal small subunit assembly"/>
    <property type="evidence" value="ECO:0007669"/>
    <property type="project" value="TreeGrafter"/>
</dbReference>
<dbReference type="CDD" id="cd04163">
    <property type="entry name" value="Era"/>
    <property type="match status" value="1"/>
</dbReference>
<dbReference type="CDD" id="cd22534">
    <property type="entry name" value="KH-II_Era"/>
    <property type="match status" value="1"/>
</dbReference>
<dbReference type="Gene3D" id="3.30.300.20">
    <property type="match status" value="1"/>
</dbReference>
<dbReference type="Gene3D" id="3.40.50.300">
    <property type="entry name" value="P-loop containing nucleotide triphosphate hydrolases"/>
    <property type="match status" value="1"/>
</dbReference>
<dbReference type="HAMAP" id="MF_00367">
    <property type="entry name" value="GTPase_Era"/>
    <property type="match status" value="1"/>
</dbReference>
<dbReference type="InterPro" id="IPR030388">
    <property type="entry name" value="G_ERA_dom"/>
</dbReference>
<dbReference type="InterPro" id="IPR006073">
    <property type="entry name" value="GTP-bd"/>
</dbReference>
<dbReference type="InterPro" id="IPR005662">
    <property type="entry name" value="GTPase_Era-like"/>
</dbReference>
<dbReference type="InterPro" id="IPR015946">
    <property type="entry name" value="KH_dom-like_a/b"/>
</dbReference>
<dbReference type="InterPro" id="IPR004044">
    <property type="entry name" value="KH_dom_type_2"/>
</dbReference>
<dbReference type="InterPro" id="IPR027417">
    <property type="entry name" value="P-loop_NTPase"/>
</dbReference>
<dbReference type="InterPro" id="IPR005225">
    <property type="entry name" value="Small_GTP-bd"/>
</dbReference>
<dbReference type="NCBIfam" id="TIGR00436">
    <property type="entry name" value="era"/>
    <property type="match status" value="1"/>
</dbReference>
<dbReference type="NCBIfam" id="NF000908">
    <property type="entry name" value="PRK00089.1"/>
    <property type="match status" value="1"/>
</dbReference>
<dbReference type="NCBIfam" id="TIGR00231">
    <property type="entry name" value="small_GTP"/>
    <property type="match status" value="1"/>
</dbReference>
<dbReference type="PANTHER" id="PTHR42698">
    <property type="entry name" value="GTPASE ERA"/>
    <property type="match status" value="1"/>
</dbReference>
<dbReference type="PANTHER" id="PTHR42698:SF1">
    <property type="entry name" value="GTPASE ERA, MITOCHONDRIAL"/>
    <property type="match status" value="1"/>
</dbReference>
<dbReference type="Pfam" id="PF07650">
    <property type="entry name" value="KH_2"/>
    <property type="match status" value="1"/>
</dbReference>
<dbReference type="Pfam" id="PF01926">
    <property type="entry name" value="MMR_HSR1"/>
    <property type="match status" value="1"/>
</dbReference>
<dbReference type="SUPFAM" id="SSF52540">
    <property type="entry name" value="P-loop containing nucleoside triphosphate hydrolases"/>
    <property type="match status" value="1"/>
</dbReference>
<dbReference type="PROSITE" id="PS51713">
    <property type="entry name" value="G_ERA"/>
    <property type="match status" value="1"/>
</dbReference>
<dbReference type="PROSITE" id="PS50823">
    <property type="entry name" value="KH_TYPE_2"/>
    <property type="match status" value="1"/>
</dbReference>